<proteinExistence type="inferred from homology"/>
<accession>Q6C7U1</accession>
<name>CCPR3_YARLI</name>
<dbReference type="EC" id="1.11.1.-"/>
<dbReference type="EMBL" id="CR382130">
    <property type="protein sequence ID" value="CAG81475.1"/>
    <property type="molecule type" value="Genomic_DNA"/>
</dbReference>
<dbReference type="RefSeq" id="XP_503271.1">
    <property type="nucleotide sequence ID" value="XM_503271.1"/>
</dbReference>
<dbReference type="SMR" id="Q6C7U1"/>
<dbReference type="STRING" id="284591.Q6C7U1"/>
<dbReference type="PeroxiBase" id="2365">
    <property type="entry name" value="YlCcP03"/>
</dbReference>
<dbReference type="EnsemblFungi" id="CAG81475">
    <property type="protein sequence ID" value="CAG81475"/>
    <property type="gene ID" value="YALI0_D25366g"/>
</dbReference>
<dbReference type="KEGG" id="yli:2910665"/>
<dbReference type="VEuPathDB" id="FungiDB:YALI0_D25366g"/>
<dbReference type="HOGENOM" id="CLU_036959_0_1_1"/>
<dbReference type="InParanoid" id="Q6C7U1"/>
<dbReference type="OMA" id="MGKCYPK"/>
<dbReference type="OrthoDB" id="103212at4891"/>
<dbReference type="Proteomes" id="UP000001300">
    <property type="component" value="Chromosome D"/>
</dbReference>
<dbReference type="GO" id="GO:0020037">
    <property type="term" value="F:heme binding"/>
    <property type="evidence" value="ECO:0007669"/>
    <property type="project" value="InterPro"/>
</dbReference>
<dbReference type="GO" id="GO:0046872">
    <property type="term" value="F:metal ion binding"/>
    <property type="evidence" value="ECO:0007669"/>
    <property type="project" value="UniProtKB-KW"/>
</dbReference>
<dbReference type="GO" id="GO:0004601">
    <property type="term" value="F:peroxidase activity"/>
    <property type="evidence" value="ECO:0000318"/>
    <property type="project" value="GO_Central"/>
</dbReference>
<dbReference type="GO" id="GO:0034599">
    <property type="term" value="P:cellular response to oxidative stress"/>
    <property type="evidence" value="ECO:0000318"/>
    <property type="project" value="GO_Central"/>
</dbReference>
<dbReference type="GO" id="GO:0042744">
    <property type="term" value="P:hydrogen peroxide catabolic process"/>
    <property type="evidence" value="ECO:0000318"/>
    <property type="project" value="GO_Central"/>
</dbReference>
<dbReference type="GO" id="GO:0000302">
    <property type="term" value="P:response to reactive oxygen species"/>
    <property type="evidence" value="ECO:0000318"/>
    <property type="project" value="GO_Central"/>
</dbReference>
<dbReference type="FunFam" id="1.10.520.10:FF:000005">
    <property type="entry name" value="Cytochrome c peroxidase"/>
    <property type="match status" value="1"/>
</dbReference>
<dbReference type="Gene3D" id="1.10.520.10">
    <property type="match status" value="1"/>
</dbReference>
<dbReference type="Gene3D" id="1.10.420.10">
    <property type="entry name" value="Peroxidase, domain 2"/>
    <property type="match status" value="1"/>
</dbReference>
<dbReference type="InterPro" id="IPR044831">
    <property type="entry name" value="Ccp1-like"/>
</dbReference>
<dbReference type="InterPro" id="IPR002016">
    <property type="entry name" value="Haem_peroxidase"/>
</dbReference>
<dbReference type="InterPro" id="IPR010255">
    <property type="entry name" value="Haem_peroxidase_sf"/>
</dbReference>
<dbReference type="InterPro" id="IPR002207">
    <property type="entry name" value="Peroxidase_I"/>
</dbReference>
<dbReference type="InterPro" id="IPR019794">
    <property type="entry name" value="Peroxidases_AS"/>
</dbReference>
<dbReference type="InterPro" id="IPR019793">
    <property type="entry name" value="Peroxidases_heam-ligand_BS"/>
</dbReference>
<dbReference type="PANTHER" id="PTHR31356:SF36">
    <property type="entry name" value="L-ASCORBATE PEROXIDASE 3"/>
    <property type="match status" value="1"/>
</dbReference>
<dbReference type="PANTHER" id="PTHR31356">
    <property type="entry name" value="THYLAKOID LUMENAL 29 KDA PROTEIN, CHLOROPLASTIC-RELATED"/>
    <property type="match status" value="1"/>
</dbReference>
<dbReference type="Pfam" id="PF00141">
    <property type="entry name" value="peroxidase"/>
    <property type="match status" value="1"/>
</dbReference>
<dbReference type="PRINTS" id="PR00459">
    <property type="entry name" value="ASPEROXIDASE"/>
</dbReference>
<dbReference type="PRINTS" id="PR00458">
    <property type="entry name" value="PEROXIDASE"/>
</dbReference>
<dbReference type="SUPFAM" id="SSF48113">
    <property type="entry name" value="Heme-dependent peroxidases"/>
    <property type="match status" value="1"/>
</dbReference>
<dbReference type="PROSITE" id="PS00435">
    <property type="entry name" value="PEROXIDASE_1"/>
    <property type="match status" value="1"/>
</dbReference>
<dbReference type="PROSITE" id="PS00436">
    <property type="entry name" value="PEROXIDASE_2"/>
    <property type="match status" value="1"/>
</dbReference>
<dbReference type="PROSITE" id="PS50873">
    <property type="entry name" value="PEROXIDASE_4"/>
    <property type="match status" value="1"/>
</dbReference>
<gene>
    <name type="ordered locus">YALI0D25366g</name>
</gene>
<keyword id="KW-0349">Heme</keyword>
<keyword id="KW-0408">Iron</keyword>
<keyword id="KW-0479">Metal-binding</keyword>
<keyword id="KW-0560">Oxidoreductase</keyword>
<keyword id="KW-0575">Peroxidase</keyword>
<keyword id="KW-1185">Reference proteome</keyword>
<reference key="1">
    <citation type="journal article" date="2004" name="Nature">
        <title>Genome evolution in yeasts.</title>
        <authorList>
            <person name="Dujon B."/>
            <person name="Sherman D."/>
            <person name="Fischer G."/>
            <person name="Durrens P."/>
            <person name="Casaregola S."/>
            <person name="Lafontaine I."/>
            <person name="de Montigny J."/>
            <person name="Marck C."/>
            <person name="Neuveglise C."/>
            <person name="Talla E."/>
            <person name="Goffard N."/>
            <person name="Frangeul L."/>
            <person name="Aigle M."/>
            <person name="Anthouard V."/>
            <person name="Babour A."/>
            <person name="Barbe V."/>
            <person name="Barnay S."/>
            <person name="Blanchin S."/>
            <person name="Beckerich J.-M."/>
            <person name="Beyne E."/>
            <person name="Bleykasten C."/>
            <person name="Boisrame A."/>
            <person name="Boyer J."/>
            <person name="Cattolico L."/>
            <person name="Confanioleri F."/>
            <person name="de Daruvar A."/>
            <person name="Despons L."/>
            <person name="Fabre E."/>
            <person name="Fairhead C."/>
            <person name="Ferry-Dumazet H."/>
            <person name="Groppi A."/>
            <person name="Hantraye F."/>
            <person name="Hennequin C."/>
            <person name="Jauniaux N."/>
            <person name="Joyet P."/>
            <person name="Kachouri R."/>
            <person name="Kerrest A."/>
            <person name="Koszul R."/>
            <person name="Lemaire M."/>
            <person name="Lesur I."/>
            <person name="Ma L."/>
            <person name="Muller H."/>
            <person name="Nicaud J.-M."/>
            <person name="Nikolski M."/>
            <person name="Oztas S."/>
            <person name="Ozier-Kalogeropoulos O."/>
            <person name="Pellenz S."/>
            <person name="Potier S."/>
            <person name="Richard G.-F."/>
            <person name="Straub M.-L."/>
            <person name="Suleau A."/>
            <person name="Swennen D."/>
            <person name="Tekaia F."/>
            <person name="Wesolowski-Louvel M."/>
            <person name="Westhof E."/>
            <person name="Wirth B."/>
            <person name="Zeniou-Meyer M."/>
            <person name="Zivanovic Y."/>
            <person name="Bolotin-Fukuhara M."/>
            <person name="Thierry A."/>
            <person name="Bouchier C."/>
            <person name="Caudron B."/>
            <person name="Scarpelli C."/>
            <person name="Gaillardin C."/>
            <person name="Weissenbach J."/>
            <person name="Wincker P."/>
            <person name="Souciet J.-L."/>
        </authorList>
    </citation>
    <scope>NUCLEOTIDE SEQUENCE [LARGE SCALE GENOMIC DNA]</scope>
    <source>
        <strain>CLIB 122 / E 150</strain>
    </source>
</reference>
<protein>
    <recommendedName>
        <fullName>Putative heme-binding peroxidase</fullName>
        <ecNumber>1.11.1.-</ecNumber>
    </recommendedName>
</protein>
<sequence>MNYPSVSEQKHRVFIIYSAYLRVQFRESARLAVSVRNKNYNLVRADLHNILPQKNTTVFKDGTLAPLLIRLAWHSCATYDKYTRTGGSNGATMRYHLEASDEGNVGLEVARLSLEPIKRKHPWITYADLWILAGVVSIEACKGPSIKWRDGRVDYEDDLLVPPNGRLPLGGGDASHVRTIFSRMGFNDQETVALIGAHSLGRLHHHRSGFDGPWTSNPAKCDNEFYKLLLGNVWTLVDSPTGRKQYVNSTGQVMMPSDMSLIEDANFRFWVDQYAVSEELWRDHFALAFEKLTELGR</sequence>
<feature type="chain" id="PRO_0000055591" description="Putative heme-binding peroxidase">
    <location>
        <begin position="1"/>
        <end position="297"/>
    </location>
</feature>
<feature type="active site" description="Proton acceptor" evidence="2 3">
    <location>
        <position position="74"/>
    </location>
</feature>
<feature type="active site" description="Tryptophan radical intermediate" evidence="1">
    <location>
        <position position="214"/>
    </location>
</feature>
<feature type="binding site" description="axial binding residue" evidence="2">
    <location>
        <position position="198"/>
    </location>
    <ligand>
        <name>heme b</name>
        <dbReference type="ChEBI" id="CHEBI:60344"/>
    </ligand>
    <ligandPart>
        <name>Fe</name>
        <dbReference type="ChEBI" id="CHEBI:18248"/>
    </ligandPart>
</feature>
<feature type="site" description="Transition state stabilizer" evidence="2">
    <location>
        <position position="70"/>
    </location>
</feature>
<organism>
    <name type="scientific">Yarrowia lipolytica (strain CLIB 122 / E 150)</name>
    <name type="common">Yeast</name>
    <name type="synonym">Candida lipolytica</name>
    <dbReference type="NCBI Taxonomy" id="284591"/>
    <lineage>
        <taxon>Eukaryota</taxon>
        <taxon>Fungi</taxon>
        <taxon>Dikarya</taxon>
        <taxon>Ascomycota</taxon>
        <taxon>Saccharomycotina</taxon>
        <taxon>Dipodascomycetes</taxon>
        <taxon>Dipodascales</taxon>
        <taxon>Dipodascales incertae sedis</taxon>
        <taxon>Yarrowia</taxon>
    </lineage>
</organism>
<comment type="function">
    <text evidence="1">Destroys radicals which are normally produced within the cells and which are toxic to biological systems.</text>
</comment>
<comment type="cofactor">
    <cofactor evidence="2">
        <name>heme b</name>
        <dbReference type="ChEBI" id="CHEBI:60344"/>
    </cofactor>
    <text evidence="2">Binds 1 heme b (iron(II)-protoporphyrin IX) group per subunit.</text>
</comment>
<comment type="similarity">
    <text evidence="4">Belongs to the peroxidase family. Cytochrome c peroxidase subfamily.</text>
</comment>
<evidence type="ECO:0000250" key="1"/>
<evidence type="ECO:0000255" key="2">
    <source>
        <dbReference type="PROSITE-ProRule" id="PRU00297"/>
    </source>
</evidence>
<evidence type="ECO:0000255" key="3">
    <source>
        <dbReference type="PROSITE-ProRule" id="PRU10012"/>
    </source>
</evidence>
<evidence type="ECO:0000305" key="4"/>